<keyword id="KW-0326">Glycosidase</keyword>
<keyword id="KW-0378">Hydrolase</keyword>
<keyword id="KW-0456">Lyase</keyword>
<keyword id="KW-0464">Manganese</keyword>
<keyword id="KW-0479">Metal-binding</keyword>
<keyword id="KW-1185">Reference proteome</keyword>
<dbReference type="EC" id="4.2.1.70" evidence="1"/>
<dbReference type="EMBL" id="CP000724">
    <property type="protein sequence ID" value="ABR46928.1"/>
    <property type="molecule type" value="Genomic_DNA"/>
</dbReference>
<dbReference type="RefSeq" id="WP_012061971.1">
    <property type="nucleotide sequence ID" value="NC_009633.1"/>
</dbReference>
<dbReference type="SMR" id="A6TL60"/>
<dbReference type="STRING" id="293826.Amet_0703"/>
<dbReference type="KEGG" id="amt:Amet_0703"/>
<dbReference type="eggNOG" id="COG2313">
    <property type="taxonomic scope" value="Bacteria"/>
</dbReference>
<dbReference type="HOGENOM" id="CLU_012201_0_1_9"/>
<dbReference type="OrthoDB" id="9805870at2"/>
<dbReference type="Proteomes" id="UP000001572">
    <property type="component" value="Chromosome"/>
</dbReference>
<dbReference type="GO" id="GO:0005737">
    <property type="term" value="C:cytoplasm"/>
    <property type="evidence" value="ECO:0007669"/>
    <property type="project" value="TreeGrafter"/>
</dbReference>
<dbReference type="GO" id="GO:0016798">
    <property type="term" value="F:hydrolase activity, acting on glycosyl bonds"/>
    <property type="evidence" value="ECO:0007669"/>
    <property type="project" value="UniProtKB-KW"/>
</dbReference>
<dbReference type="GO" id="GO:0046872">
    <property type="term" value="F:metal ion binding"/>
    <property type="evidence" value="ECO:0007669"/>
    <property type="project" value="UniProtKB-KW"/>
</dbReference>
<dbReference type="GO" id="GO:0004730">
    <property type="term" value="F:pseudouridylate synthase activity"/>
    <property type="evidence" value="ECO:0007669"/>
    <property type="project" value="UniProtKB-UniRule"/>
</dbReference>
<dbReference type="GO" id="GO:0046113">
    <property type="term" value="P:nucleobase catabolic process"/>
    <property type="evidence" value="ECO:0007669"/>
    <property type="project" value="UniProtKB-UniRule"/>
</dbReference>
<dbReference type="Gene3D" id="3.40.1790.10">
    <property type="entry name" value="Indigoidine synthase domain"/>
    <property type="match status" value="1"/>
</dbReference>
<dbReference type="HAMAP" id="MF_01876">
    <property type="entry name" value="PsiMP_glycosidase"/>
    <property type="match status" value="1"/>
</dbReference>
<dbReference type="InterPro" id="IPR022830">
    <property type="entry name" value="Indigdn_synthA-like"/>
</dbReference>
<dbReference type="InterPro" id="IPR007342">
    <property type="entry name" value="PsuG"/>
</dbReference>
<dbReference type="PANTHER" id="PTHR42909:SF1">
    <property type="entry name" value="CARBOHYDRATE KINASE PFKB DOMAIN-CONTAINING PROTEIN"/>
    <property type="match status" value="1"/>
</dbReference>
<dbReference type="PANTHER" id="PTHR42909">
    <property type="entry name" value="ZGC:136858"/>
    <property type="match status" value="1"/>
</dbReference>
<dbReference type="Pfam" id="PF04227">
    <property type="entry name" value="Indigoidine_A"/>
    <property type="match status" value="1"/>
</dbReference>
<dbReference type="SUPFAM" id="SSF110581">
    <property type="entry name" value="Indigoidine synthase A-like"/>
    <property type="match status" value="1"/>
</dbReference>
<organism>
    <name type="scientific">Alkaliphilus metalliredigens (strain QYMF)</name>
    <dbReference type="NCBI Taxonomy" id="293826"/>
    <lineage>
        <taxon>Bacteria</taxon>
        <taxon>Bacillati</taxon>
        <taxon>Bacillota</taxon>
        <taxon>Clostridia</taxon>
        <taxon>Peptostreptococcales</taxon>
        <taxon>Natronincolaceae</taxon>
        <taxon>Alkaliphilus</taxon>
    </lineage>
</organism>
<gene>
    <name evidence="1" type="primary">psuG</name>
    <name type="ordered locus">Amet_0703</name>
</gene>
<evidence type="ECO:0000255" key="1">
    <source>
        <dbReference type="HAMAP-Rule" id="MF_01876"/>
    </source>
</evidence>
<comment type="function">
    <text evidence="1">Catalyzes the reversible cleavage of pseudouridine 5'-phosphate (PsiMP) to ribose 5-phosphate and uracil. Functions biologically in the cleavage direction, as part of a pseudouridine degradation pathway.</text>
</comment>
<comment type="catalytic activity">
    <reaction evidence="1">
        <text>D-ribose 5-phosphate + uracil = psi-UMP + H2O</text>
        <dbReference type="Rhea" id="RHEA:18337"/>
        <dbReference type="ChEBI" id="CHEBI:15377"/>
        <dbReference type="ChEBI" id="CHEBI:17568"/>
        <dbReference type="ChEBI" id="CHEBI:58380"/>
        <dbReference type="ChEBI" id="CHEBI:78346"/>
        <dbReference type="EC" id="4.2.1.70"/>
    </reaction>
</comment>
<comment type="cofactor">
    <cofactor evidence="1">
        <name>Mn(2+)</name>
        <dbReference type="ChEBI" id="CHEBI:29035"/>
    </cofactor>
    <text evidence="1">Binds 1 Mn(2+) ion per subunit.</text>
</comment>
<comment type="subunit">
    <text evidence="1">Homotrimer.</text>
</comment>
<comment type="similarity">
    <text evidence="1">Belongs to the pseudouridine-5'-phosphate glycosidase family.</text>
</comment>
<accession>A6TL60</accession>
<name>PSUG_ALKMQ</name>
<reference key="1">
    <citation type="journal article" date="2016" name="Genome Announc.">
        <title>Complete genome sequence of Alkaliphilus metalliredigens strain QYMF, an alkaliphilic and metal-reducing bacterium isolated from borax-contaminated leachate ponds.</title>
        <authorList>
            <person name="Hwang C."/>
            <person name="Copeland A."/>
            <person name="Lucas S."/>
            <person name="Lapidus A."/>
            <person name="Barry K."/>
            <person name="Detter J.C."/>
            <person name="Glavina Del Rio T."/>
            <person name="Hammon N."/>
            <person name="Israni S."/>
            <person name="Dalin E."/>
            <person name="Tice H."/>
            <person name="Pitluck S."/>
            <person name="Chertkov O."/>
            <person name="Brettin T."/>
            <person name="Bruce D."/>
            <person name="Han C."/>
            <person name="Schmutz J."/>
            <person name="Larimer F."/>
            <person name="Land M.L."/>
            <person name="Hauser L."/>
            <person name="Kyrpides N."/>
            <person name="Mikhailova N."/>
            <person name="Ye Q."/>
            <person name="Zhou J."/>
            <person name="Richardson P."/>
            <person name="Fields M.W."/>
        </authorList>
    </citation>
    <scope>NUCLEOTIDE SEQUENCE [LARGE SCALE GENOMIC DNA]</scope>
    <source>
        <strain>QYMF</strain>
    </source>
</reference>
<proteinExistence type="inferred from homology"/>
<sequence length="307" mass="32753">MKNVEKYLEYAPEVKKAIAEGRPIVALESTIISHGMPYPQNVETAKKVEDMIREGGAVPATIAIVKGKIKVGLTEEELMFLGQSKDVVKASRRDLPLIIAKELNGATTVASTMIIAALAGIKVFVTGGIGGVHRGAQETLDISADLMELAQTNVAVVCAGVKSILDIGLTLEVLETHGVPIVGYQTEDFPAFYTRKSGYGVDYAVANVEELARALKAKWDLDLKGGVVVANPIPEAYAMDEALITQAIDEAVQEAAAKGIQGKETTPFLLTKIKEITEGKSLESNIELVFNNAKIGAELAVALHRLS</sequence>
<protein>
    <recommendedName>
        <fullName evidence="1">Pseudouridine-5'-phosphate glycosidase</fullName>
        <shortName evidence="1">PsiMP glycosidase</shortName>
        <ecNumber evidence="1">4.2.1.70</ecNumber>
    </recommendedName>
</protein>
<feature type="chain" id="PRO_0000390507" description="Pseudouridine-5'-phosphate glycosidase">
    <location>
        <begin position="1"/>
        <end position="307"/>
    </location>
</feature>
<feature type="active site" description="Proton donor" evidence="1">
    <location>
        <position position="28"/>
    </location>
</feature>
<feature type="active site" description="Nucleophile" evidence="1">
    <location>
        <position position="162"/>
    </location>
</feature>
<feature type="binding site" evidence="1">
    <location>
        <position position="89"/>
    </location>
    <ligand>
        <name>substrate</name>
    </ligand>
</feature>
<feature type="binding site" evidence="1">
    <location>
        <position position="109"/>
    </location>
    <ligand>
        <name>substrate</name>
    </ligand>
</feature>
<feature type="binding site" evidence="1">
    <location>
        <position position="141"/>
    </location>
    <ligand>
        <name>Mn(2+)</name>
        <dbReference type="ChEBI" id="CHEBI:29035"/>
    </ligand>
</feature>
<feature type="binding site" evidence="1">
    <location>
        <begin position="143"/>
        <end position="145"/>
    </location>
    <ligand>
        <name>substrate</name>
    </ligand>
</feature>